<accession>B9M9Q4</accession>
<sequence>MKITAIIPARYASTRFEGKALAQIQGKPMVQHVYERTLKASLVSEVIVATDDERIVAAVRAFGGRAEMTSRSHETGTDRLAEVAARLDSDIIVNVQGDEPLIDPAMIDEAISPLAEDSSLLMGTLKTRIKSLHDFLSPNVVKVVTDWEGYALYFSRSPLPNFRDKWNDLKDEAFSSRKLLCFKHVGLYVYRREFLLQFAQMSPTYLEMAEKLEQLRVLENGYRIKVVETDFESIGVDTPGDLDKVLERLKDRG</sequence>
<dbReference type="EC" id="2.7.7.38" evidence="1"/>
<dbReference type="EMBL" id="CP001390">
    <property type="protein sequence ID" value="ACM20626.1"/>
    <property type="molecule type" value="Genomic_DNA"/>
</dbReference>
<dbReference type="RefSeq" id="WP_012647355.1">
    <property type="nucleotide sequence ID" value="NC_011979.1"/>
</dbReference>
<dbReference type="SMR" id="B9M9Q4"/>
<dbReference type="STRING" id="316067.Geob_2272"/>
<dbReference type="KEGG" id="geo:Geob_2272"/>
<dbReference type="eggNOG" id="COG1212">
    <property type="taxonomic scope" value="Bacteria"/>
</dbReference>
<dbReference type="HOGENOM" id="CLU_065038_0_1_7"/>
<dbReference type="OrthoDB" id="9815559at2"/>
<dbReference type="UniPathway" id="UPA00030"/>
<dbReference type="UniPathway" id="UPA00358">
    <property type="reaction ID" value="UER00476"/>
</dbReference>
<dbReference type="Proteomes" id="UP000007721">
    <property type="component" value="Chromosome"/>
</dbReference>
<dbReference type="GO" id="GO:0005829">
    <property type="term" value="C:cytosol"/>
    <property type="evidence" value="ECO:0007669"/>
    <property type="project" value="TreeGrafter"/>
</dbReference>
<dbReference type="GO" id="GO:0008690">
    <property type="term" value="F:3-deoxy-manno-octulosonate cytidylyltransferase activity"/>
    <property type="evidence" value="ECO:0007669"/>
    <property type="project" value="UniProtKB-UniRule"/>
</dbReference>
<dbReference type="GO" id="GO:0033468">
    <property type="term" value="P:CMP-keto-3-deoxy-D-manno-octulosonic acid biosynthetic process"/>
    <property type="evidence" value="ECO:0007669"/>
    <property type="project" value="UniProtKB-UniRule"/>
</dbReference>
<dbReference type="GO" id="GO:0009103">
    <property type="term" value="P:lipopolysaccharide biosynthetic process"/>
    <property type="evidence" value="ECO:0007669"/>
    <property type="project" value="UniProtKB-UniRule"/>
</dbReference>
<dbReference type="CDD" id="cd02517">
    <property type="entry name" value="CMP-KDO-Synthetase"/>
    <property type="match status" value="1"/>
</dbReference>
<dbReference type="FunFam" id="3.90.550.10:FF:000011">
    <property type="entry name" value="3-deoxy-manno-octulosonate cytidylyltransferase"/>
    <property type="match status" value="1"/>
</dbReference>
<dbReference type="Gene3D" id="3.90.550.10">
    <property type="entry name" value="Spore Coat Polysaccharide Biosynthesis Protein SpsA, Chain A"/>
    <property type="match status" value="1"/>
</dbReference>
<dbReference type="HAMAP" id="MF_00057">
    <property type="entry name" value="KdsB"/>
    <property type="match status" value="1"/>
</dbReference>
<dbReference type="InterPro" id="IPR003329">
    <property type="entry name" value="Cytidylyl_trans"/>
</dbReference>
<dbReference type="InterPro" id="IPR004528">
    <property type="entry name" value="KdsB"/>
</dbReference>
<dbReference type="InterPro" id="IPR029044">
    <property type="entry name" value="Nucleotide-diphossugar_trans"/>
</dbReference>
<dbReference type="NCBIfam" id="TIGR00466">
    <property type="entry name" value="kdsB"/>
    <property type="match status" value="1"/>
</dbReference>
<dbReference type="NCBIfam" id="NF003950">
    <property type="entry name" value="PRK05450.1-3"/>
    <property type="match status" value="1"/>
</dbReference>
<dbReference type="NCBIfam" id="NF003952">
    <property type="entry name" value="PRK05450.1-5"/>
    <property type="match status" value="1"/>
</dbReference>
<dbReference type="NCBIfam" id="NF009905">
    <property type="entry name" value="PRK13368.1"/>
    <property type="match status" value="1"/>
</dbReference>
<dbReference type="PANTHER" id="PTHR42866">
    <property type="entry name" value="3-DEOXY-MANNO-OCTULOSONATE CYTIDYLYLTRANSFERASE"/>
    <property type="match status" value="1"/>
</dbReference>
<dbReference type="PANTHER" id="PTHR42866:SF2">
    <property type="entry name" value="3-DEOXY-MANNO-OCTULOSONATE CYTIDYLYLTRANSFERASE, MITOCHONDRIAL"/>
    <property type="match status" value="1"/>
</dbReference>
<dbReference type="Pfam" id="PF02348">
    <property type="entry name" value="CTP_transf_3"/>
    <property type="match status" value="1"/>
</dbReference>
<dbReference type="SUPFAM" id="SSF53448">
    <property type="entry name" value="Nucleotide-diphospho-sugar transferases"/>
    <property type="match status" value="1"/>
</dbReference>
<evidence type="ECO:0000255" key="1">
    <source>
        <dbReference type="HAMAP-Rule" id="MF_00057"/>
    </source>
</evidence>
<organism>
    <name type="scientific">Geotalea daltonii (strain DSM 22248 / JCM 15807 / FRC-32)</name>
    <name type="common">Geobacter daltonii</name>
    <dbReference type="NCBI Taxonomy" id="316067"/>
    <lineage>
        <taxon>Bacteria</taxon>
        <taxon>Pseudomonadati</taxon>
        <taxon>Thermodesulfobacteriota</taxon>
        <taxon>Desulfuromonadia</taxon>
        <taxon>Geobacterales</taxon>
        <taxon>Geobacteraceae</taxon>
        <taxon>Geotalea</taxon>
    </lineage>
</organism>
<gene>
    <name evidence="1" type="primary">kdsB</name>
    <name type="ordered locus">Geob_2272</name>
</gene>
<comment type="function">
    <text evidence="1">Activates KDO (a required 8-carbon sugar) for incorporation into bacterial lipopolysaccharide in Gram-negative bacteria.</text>
</comment>
<comment type="catalytic activity">
    <reaction evidence="1">
        <text>3-deoxy-alpha-D-manno-oct-2-ulosonate + CTP = CMP-3-deoxy-beta-D-manno-octulosonate + diphosphate</text>
        <dbReference type="Rhea" id="RHEA:23448"/>
        <dbReference type="ChEBI" id="CHEBI:33019"/>
        <dbReference type="ChEBI" id="CHEBI:37563"/>
        <dbReference type="ChEBI" id="CHEBI:85986"/>
        <dbReference type="ChEBI" id="CHEBI:85987"/>
        <dbReference type="EC" id="2.7.7.38"/>
    </reaction>
</comment>
<comment type="pathway">
    <text evidence="1">Nucleotide-sugar biosynthesis; CMP-3-deoxy-D-manno-octulosonate biosynthesis; CMP-3-deoxy-D-manno-octulosonate from 3-deoxy-D-manno-octulosonate and CTP: step 1/1.</text>
</comment>
<comment type="pathway">
    <text evidence="1">Bacterial outer membrane biogenesis; lipopolysaccharide biosynthesis.</text>
</comment>
<comment type="subcellular location">
    <subcellularLocation>
        <location evidence="1">Cytoplasm</location>
    </subcellularLocation>
</comment>
<comment type="similarity">
    <text evidence="1">Belongs to the KdsB family.</text>
</comment>
<feature type="chain" id="PRO_1000117801" description="3-deoxy-manno-octulosonate cytidylyltransferase">
    <location>
        <begin position="1"/>
        <end position="253"/>
    </location>
</feature>
<proteinExistence type="inferred from homology"/>
<keyword id="KW-0963">Cytoplasm</keyword>
<keyword id="KW-0448">Lipopolysaccharide biosynthesis</keyword>
<keyword id="KW-0548">Nucleotidyltransferase</keyword>
<keyword id="KW-1185">Reference proteome</keyword>
<keyword id="KW-0808">Transferase</keyword>
<protein>
    <recommendedName>
        <fullName evidence="1">3-deoxy-manno-octulosonate cytidylyltransferase</fullName>
        <ecNumber evidence="1">2.7.7.38</ecNumber>
    </recommendedName>
    <alternativeName>
        <fullName evidence="1">CMP-2-keto-3-deoxyoctulosonic acid synthase</fullName>
        <shortName evidence="1">CKS</shortName>
        <shortName evidence="1">CMP-KDO synthase</shortName>
    </alternativeName>
</protein>
<name>KDSB_GEODF</name>
<reference key="1">
    <citation type="submission" date="2009-01" db="EMBL/GenBank/DDBJ databases">
        <title>Complete sequence of Geobacter sp. FRC-32.</title>
        <authorList>
            <consortium name="US DOE Joint Genome Institute"/>
            <person name="Lucas S."/>
            <person name="Copeland A."/>
            <person name="Lapidus A."/>
            <person name="Glavina del Rio T."/>
            <person name="Dalin E."/>
            <person name="Tice H."/>
            <person name="Bruce D."/>
            <person name="Goodwin L."/>
            <person name="Pitluck S."/>
            <person name="Saunders E."/>
            <person name="Brettin T."/>
            <person name="Detter J.C."/>
            <person name="Han C."/>
            <person name="Larimer F."/>
            <person name="Land M."/>
            <person name="Hauser L."/>
            <person name="Kyrpides N."/>
            <person name="Ovchinnikova G."/>
            <person name="Kostka J."/>
            <person name="Richardson P."/>
        </authorList>
    </citation>
    <scope>NUCLEOTIDE SEQUENCE [LARGE SCALE GENOMIC DNA]</scope>
    <source>
        <strain>DSM 22248 / JCM 15807 / FRC-32</strain>
    </source>
</reference>